<name>TRHP2_BACSU</name>
<evidence type="ECO:0000269" key="1">
    <source>
    </source>
</evidence>
<evidence type="ECO:0000303" key="2">
    <source>
    </source>
</evidence>
<evidence type="ECO:0000305" key="3"/>
<reference key="1">
    <citation type="journal article" date="1997" name="Nature">
        <title>The complete genome sequence of the Gram-positive bacterium Bacillus subtilis.</title>
        <authorList>
            <person name="Kunst F."/>
            <person name="Ogasawara N."/>
            <person name="Moszer I."/>
            <person name="Albertini A.M."/>
            <person name="Alloni G."/>
            <person name="Azevedo V."/>
            <person name="Bertero M.G."/>
            <person name="Bessieres P."/>
            <person name="Bolotin A."/>
            <person name="Borchert S."/>
            <person name="Borriss R."/>
            <person name="Boursier L."/>
            <person name="Brans A."/>
            <person name="Braun M."/>
            <person name="Brignell S.C."/>
            <person name="Bron S."/>
            <person name="Brouillet S."/>
            <person name="Bruschi C.V."/>
            <person name="Caldwell B."/>
            <person name="Capuano V."/>
            <person name="Carter N.M."/>
            <person name="Choi S.-K."/>
            <person name="Codani J.-J."/>
            <person name="Connerton I.F."/>
            <person name="Cummings N.J."/>
            <person name="Daniel R.A."/>
            <person name="Denizot F."/>
            <person name="Devine K.M."/>
            <person name="Duesterhoeft A."/>
            <person name="Ehrlich S.D."/>
            <person name="Emmerson P.T."/>
            <person name="Entian K.-D."/>
            <person name="Errington J."/>
            <person name="Fabret C."/>
            <person name="Ferrari E."/>
            <person name="Foulger D."/>
            <person name="Fritz C."/>
            <person name="Fujita M."/>
            <person name="Fujita Y."/>
            <person name="Fuma S."/>
            <person name="Galizzi A."/>
            <person name="Galleron N."/>
            <person name="Ghim S.-Y."/>
            <person name="Glaser P."/>
            <person name="Goffeau A."/>
            <person name="Golightly E.J."/>
            <person name="Grandi G."/>
            <person name="Guiseppi G."/>
            <person name="Guy B.J."/>
            <person name="Haga K."/>
            <person name="Haiech J."/>
            <person name="Harwood C.R."/>
            <person name="Henaut A."/>
            <person name="Hilbert H."/>
            <person name="Holsappel S."/>
            <person name="Hosono S."/>
            <person name="Hullo M.-F."/>
            <person name="Itaya M."/>
            <person name="Jones L.-M."/>
            <person name="Joris B."/>
            <person name="Karamata D."/>
            <person name="Kasahara Y."/>
            <person name="Klaerr-Blanchard M."/>
            <person name="Klein C."/>
            <person name="Kobayashi Y."/>
            <person name="Koetter P."/>
            <person name="Koningstein G."/>
            <person name="Krogh S."/>
            <person name="Kumano M."/>
            <person name="Kurita K."/>
            <person name="Lapidus A."/>
            <person name="Lardinois S."/>
            <person name="Lauber J."/>
            <person name="Lazarevic V."/>
            <person name="Lee S.-M."/>
            <person name="Levine A."/>
            <person name="Liu H."/>
            <person name="Masuda S."/>
            <person name="Mauel C."/>
            <person name="Medigue C."/>
            <person name="Medina N."/>
            <person name="Mellado R.P."/>
            <person name="Mizuno M."/>
            <person name="Moestl D."/>
            <person name="Nakai S."/>
            <person name="Noback M."/>
            <person name="Noone D."/>
            <person name="O'Reilly M."/>
            <person name="Ogawa K."/>
            <person name="Ogiwara A."/>
            <person name="Oudega B."/>
            <person name="Park S.-H."/>
            <person name="Parro V."/>
            <person name="Pohl T.M."/>
            <person name="Portetelle D."/>
            <person name="Porwollik S."/>
            <person name="Prescott A.M."/>
            <person name="Presecan E."/>
            <person name="Pujic P."/>
            <person name="Purnelle B."/>
            <person name="Rapoport G."/>
            <person name="Rey M."/>
            <person name="Reynolds S."/>
            <person name="Rieger M."/>
            <person name="Rivolta C."/>
            <person name="Rocha E."/>
            <person name="Roche B."/>
            <person name="Rose M."/>
            <person name="Sadaie Y."/>
            <person name="Sato T."/>
            <person name="Scanlan E."/>
            <person name="Schleich S."/>
            <person name="Schroeter R."/>
            <person name="Scoffone F."/>
            <person name="Sekiguchi J."/>
            <person name="Sekowska A."/>
            <person name="Seror S.J."/>
            <person name="Serror P."/>
            <person name="Shin B.-S."/>
            <person name="Soldo B."/>
            <person name="Sorokin A."/>
            <person name="Tacconi E."/>
            <person name="Takagi T."/>
            <person name="Takahashi H."/>
            <person name="Takemaru K."/>
            <person name="Takeuchi M."/>
            <person name="Tamakoshi A."/>
            <person name="Tanaka T."/>
            <person name="Terpstra P."/>
            <person name="Tognoni A."/>
            <person name="Tosato V."/>
            <person name="Uchiyama S."/>
            <person name="Vandenbol M."/>
            <person name="Vannier F."/>
            <person name="Vassarotti A."/>
            <person name="Viari A."/>
            <person name="Wambutt R."/>
            <person name="Wedler E."/>
            <person name="Wedler H."/>
            <person name="Weitzenegger T."/>
            <person name="Winters P."/>
            <person name="Wipat A."/>
            <person name="Yamamoto H."/>
            <person name="Yamane K."/>
            <person name="Yasumoto K."/>
            <person name="Yata K."/>
            <person name="Yoshida K."/>
            <person name="Yoshikawa H.-F."/>
            <person name="Zumstein E."/>
            <person name="Yoshikawa H."/>
            <person name="Danchin A."/>
        </authorList>
    </citation>
    <scope>NUCLEOTIDE SEQUENCE [LARGE SCALE GENOMIC DNA]</scope>
    <source>
        <strain>168</strain>
    </source>
</reference>
<reference key="2">
    <citation type="journal article" date="2019" name="Nat. Commun.">
        <title>Dual pathways of tRNA hydroxylation ensure efficient translation by expanding decoding capability.</title>
        <authorList>
            <person name="Sakai Y."/>
            <person name="Kimura S."/>
            <person name="Suzuki T."/>
        </authorList>
    </citation>
    <scope>FUNCTION</scope>
    <scope>DISRUPTION PHENOTYPE</scope>
</reference>
<protein>
    <recommendedName>
        <fullName evidence="2">tRNA hydroxylation protein P2</fullName>
        <ecNumber evidence="3">3.4.-.-</ecNumber>
    </recommendedName>
</protein>
<accession>O32035</accession>
<comment type="function">
    <text evidence="1">Involved in prephenate-dependent formation of 5-hydroxyuridine (ho5U) modification at position 34 in tRNAs, the first step in 5-methoxyuridine (mo5U) biosynthesis.</text>
</comment>
<comment type="disruption phenotype">
    <text evidence="1">Deletion mutant lacking both trhP1 and trhP2 shows reduced 5-methoxyuridine (mo5U) formation in tRNAs.</text>
</comment>
<comment type="similarity">
    <text evidence="3">Belongs to the peptidase U32 family.</text>
</comment>
<sequence>MKKPELLVTPTSTADILPLIQAGATAFLVGEQRYGLRLAGEFSREDVTKAVEIAHKEGAKVYVAVNAIFHNDKVGELGEYLAFLAEAGVDAAVFGDPAVLMAARESAPDLKLHWSTETTGTNYYTCNYWGRKGAARSVLARELNMDSIVEIKENAEVEIEIQVHGMTCMFQSKRSLIGNYFEYQGKVMDIERKKKESGMFLHDKERDNKYPIFEDENGTHIMSPNDVCIIDELEELIDAGIDSFKIDGVLKMPEYLIEVTKMYREAIDLCVENRDEYEAKKEDWIERIESIQPVNRKIDTGFFFKETVY</sequence>
<proteinExistence type="inferred from homology"/>
<feature type="chain" id="PRO_0000360789" description="tRNA hydroxylation protein P2">
    <location>
        <begin position="1"/>
        <end position="309"/>
    </location>
</feature>
<organism>
    <name type="scientific">Bacillus subtilis (strain 168)</name>
    <dbReference type="NCBI Taxonomy" id="224308"/>
    <lineage>
        <taxon>Bacteria</taxon>
        <taxon>Bacillati</taxon>
        <taxon>Bacillota</taxon>
        <taxon>Bacilli</taxon>
        <taxon>Bacillales</taxon>
        <taxon>Bacillaceae</taxon>
        <taxon>Bacillus</taxon>
    </lineage>
</organism>
<keyword id="KW-0378">Hydrolase</keyword>
<keyword id="KW-0645">Protease</keyword>
<keyword id="KW-1185">Reference proteome</keyword>
<keyword id="KW-0819">tRNA processing</keyword>
<gene>
    <name evidence="2" type="primary">trhP2</name>
    <name type="synonym">yrrN</name>
    <name type="ordered locus">BSU27350</name>
</gene>
<dbReference type="EC" id="3.4.-.-" evidence="3"/>
<dbReference type="EMBL" id="AL009126">
    <property type="protein sequence ID" value="CAB14677.1"/>
    <property type="molecule type" value="Genomic_DNA"/>
</dbReference>
<dbReference type="PIR" id="G69979">
    <property type="entry name" value="G69979"/>
</dbReference>
<dbReference type="RefSeq" id="NP_390613.1">
    <property type="nucleotide sequence ID" value="NC_000964.3"/>
</dbReference>
<dbReference type="RefSeq" id="WP_004399094.1">
    <property type="nucleotide sequence ID" value="NZ_OZ025638.1"/>
</dbReference>
<dbReference type="SMR" id="O32035"/>
<dbReference type="FunCoup" id="O32035">
    <property type="interactions" value="110"/>
</dbReference>
<dbReference type="STRING" id="224308.BSU27350"/>
<dbReference type="MEROPS" id="U32.A02"/>
<dbReference type="jPOST" id="O32035"/>
<dbReference type="PaxDb" id="224308-BSU27350"/>
<dbReference type="EnsemblBacteria" id="CAB14677">
    <property type="protein sequence ID" value="CAB14677"/>
    <property type="gene ID" value="BSU_27350"/>
</dbReference>
<dbReference type="GeneID" id="937559"/>
<dbReference type="KEGG" id="bsu:BSU27350"/>
<dbReference type="PATRIC" id="fig|224308.179.peg.2971"/>
<dbReference type="eggNOG" id="COG0826">
    <property type="taxonomic scope" value="Bacteria"/>
</dbReference>
<dbReference type="InParanoid" id="O32035"/>
<dbReference type="OrthoDB" id="9807498at2"/>
<dbReference type="PhylomeDB" id="O32035"/>
<dbReference type="BioCyc" id="BSUB:BSU27350-MONOMER"/>
<dbReference type="Proteomes" id="UP000001570">
    <property type="component" value="Chromosome"/>
</dbReference>
<dbReference type="GO" id="GO:0008233">
    <property type="term" value="F:peptidase activity"/>
    <property type="evidence" value="ECO:0007669"/>
    <property type="project" value="UniProtKB-KW"/>
</dbReference>
<dbReference type="GO" id="GO:0006508">
    <property type="term" value="P:proteolysis"/>
    <property type="evidence" value="ECO:0007669"/>
    <property type="project" value="UniProtKB-KW"/>
</dbReference>
<dbReference type="GO" id="GO:0006400">
    <property type="term" value="P:tRNA modification"/>
    <property type="evidence" value="ECO:0000315"/>
    <property type="project" value="UniProtKB"/>
</dbReference>
<dbReference type="InterPro" id="IPR001539">
    <property type="entry name" value="Peptidase_U32"/>
</dbReference>
<dbReference type="InterPro" id="IPR051454">
    <property type="entry name" value="RNA/ubiquinone_mod_enzymes"/>
</dbReference>
<dbReference type="PANTHER" id="PTHR30217">
    <property type="entry name" value="PEPTIDASE U32 FAMILY"/>
    <property type="match status" value="1"/>
</dbReference>
<dbReference type="PANTHER" id="PTHR30217:SF7">
    <property type="entry name" value="TRNA HYDROXYLATION PROTEIN P2"/>
    <property type="match status" value="1"/>
</dbReference>
<dbReference type="Pfam" id="PF01136">
    <property type="entry name" value="Peptidase_U32"/>
    <property type="match status" value="1"/>
</dbReference>